<dbReference type="EC" id="1.1.1.201" evidence="2 3 5"/>
<dbReference type="EMBL" id="AAVN02000010">
    <property type="protein sequence ID" value="EBA38809.1"/>
    <property type="molecule type" value="Genomic_DNA"/>
</dbReference>
<dbReference type="RefSeq" id="WP_006236005.1">
    <property type="nucleotide sequence ID" value="NZ_CP048433.1"/>
</dbReference>
<dbReference type="PDB" id="5FYD">
    <property type="method" value="X-ray"/>
    <property type="resolution" value="1.60 A"/>
    <property type="chains" value="A/B=1-263"/>
</dbReference>
<dbReference type="PDB" id="5GT9">
    <property type="method" value="X-ray"/>
    <property type="resolution" value="1.70 A"/>
    <property type="chains" value="A/B=1-263"/>
</dbReference>
<dbReference type="PDBsum" id="5FYD"/>
<dbReference type="PDBsum" id="5GT9"/>
<dbReference type="SMR" id="A4ECA9"/>
<dbReference type="BRENDA" id="1.1.1.201">
    <property type="organism ID" value="2181"/>
</dbReference>
<dbReference type="Proteomes" id="UP000002979">
    <property type="component" value="Unassembled WGS sequence"/>
</dbReference>
<dbReference type="GO" id="GO:0047022">
    <property type="term" value="F:7-beta-hydroxysteroid dehydrogenase (NADP+) activity"/>
    <property type="evidence" value="ECO:0007669"/>
    <property type="project" value="UniProtKB-EC"/>
</dbReference>
<dbReference type="GO" id="GO:0000166">
    <property type="term" value="F:nucleotide binding"/>
    <property type="evidence" value="ECO:0007669"/>
    <property type="project" value="UniProtKB-KW"/>
</dbReference>
<dbReference type="GO" id="GO:0030573">
    <property type="term" value="P:bile acid catabolic process"/>
    <property type="evidence" value="ECO:0007669"/>
    <property type="project" value="UniProtKB-KW"/>
</dbReference>
<dbReference type="GO" id="GO:0016042">
    <property type="term" value="P:lipid catabolic process"/>
    <property type="evidence" value="ECO:0007669"/>
    <property type="project" value="UniProtKB-KW"/>
</dbReference>
<dbReference type="Gene3D" id="3.40.50.720">
    <property type="entry name" value="NAD(P)-binding Rossmann-like Domain"/>
    <property type="match status" value="1"/>
</dbReference>
<dbReference type="InterPro" id="IPR036291">
    <property type="entry name" value="NAD(P)-bd_dom_sf"/>
</dbReference>
<dbReference type="InterPro" id="IPR002347">
    <property type="entry name" value="SDR_fam"/>
</dbReference>
<dbReference type="InterPro" id="IPR051019">
    <property type="entry name" value="VLCFA-Steroid_DH"/>
</dbReference>
<dbReference type="PANTHER" id="PTHR43899">
    <property type="entry name" value="RH59310P"/>
    <property type="match status" value="1"/>
</dbReference>
<dbReference type="PANTHER" id="PTHR43899:SF13">
    <property type="entry name" value="RH59310P"/>
    <property type="match status" value="1"/>
</dbReference>
<dbReference type="Pfam" id="PF00106">
    <property type="entry name" value="adh_short"/>
    <property type="match status" value="1"/>
</dbReference>
<dbReference type="PRINTS" id="PR00081">
    <property type="entry name" value="GDHRDH"/>
</dbReference>
<dbReference type="SUPFAM" id="SSF51735">
    <property type="entry name" value="NAD(P)-binding Rossmann-fold domains"/>
    <property type="match status" value="1"/>
</dbReference>
<reference key="1">
    <citation type="submission" date="2007-01" db="EMBL/GenBank/DDBJ databases">
        <title>Draft genome sequence of Collinsella aerofaciens (ATCC 25986).</title>
        <authorList>
            <person name="Sudarsanam P."/>
            <person name="Ley R."/>
            <person name="Guruge J."/>
            <person name="Turnbaugh P.J."/>
            <person name="Mahowald M."/>
            <person name="Liep D."/>
            <person name="Gordon J."/>
        </authorList>
    </citation>
    <scope>NUCLEOTIDE SEQUENCE [LARGE SCALE GENOMIC DNA]</scope>
    <source>
        <strain>ATCC 25986 / DSM 3979 / JCM 10188 / KCTC 3647 / NCTC 11838 / VPI 1003</strain>
    </source>
</reference>
<reference key="2">
    <citation type="submission" date="2007-04" db="EMBL/GenBank/DDBJ databases">
        <authorList>
            <person name="Fulton L."/>
            <person name="Clifton S."/>
            <person name="Fulton B."/>
            <person name="Xu J."/>
            <person name="Minx P."/>
            <person name="Mardis E.R."/>
            <person name="Wilson R.K."/>
        </authorList>
    </citation>
    <scope>NUCLEOTIDE SEQUENCE [LARGE SCALE GENOMIC DNA]</scope>
    <source>
        <strain>ATCC 25986 / DSM 3979 / JCM 10188 / KCTC 3647 / NCTC 11838 / VPI 1003</strain>
    </source>
</reference>
<reference key="3">
    <citation type="journal article" date="1982" name="Appl. Environ. Microbiol.">
        <title>Characterization of NADP-dependent 7 beta-hydroxysteroid dehydrogenases from Peptostreptococcus productus and Eubacterium aerofaciens.</title>
        <authorList>
            <person name="Hirano S."/>
            <person name="Masuda N."/>
        </authorList>
    </citation>
    <scope>INDUCTION</scope>
    <scope>FUNCTION</scope>
    <scope>CATALYTIC ACTIVITY</scope>
    <scope>BIOPHYSICOCHEMICAL PROPERTIES</scope>
    <scope>SUBUNIT</scope>
    <source>
        <strain>ATCC 25986 / DSM 3979 / JCM 10188 / KCTC 3647 / NCTC 11838 / VPI 1003</strain>
    </source>
</reference>
<reference key="4">
    <citation type="journal article" date="2011" name="Appl. Microbiol. Biotechnol.">
        <title>Identification, cloning, heterologous expression, and characterization of a NADPH-dependent 7beta-hydroxysteroid dehydrogenase from Collinsella aerofaciens.</title>
        <authorList>
            <person name="Liu L."/>
            <person name="Aigner A."/>
            <person name="Schmid R.D."/>
        </authorList>
    </citation>
    <scope>FUNCTION</scope>
    <scope>CATALYTIC ACTIVITY</scope>
    <scope>BIOPHYSICOCHEMICAL PROPERTIES</scope>
    <scope>SUBUNIT</scope>
    <source>
        <strain>ATCC 25986 / DSM 3979 / JCM 10188 / KCTC 3647 / NCTC 11838 / VPI 1003</strain>
    </source>
</reference>
<reference evidence="13" key="5">
    <citation type="journal article" date="2016" name="Proteins">
        <title>Structural and biochemical insights into 7beta-hydroxysteroid dehydrogenase stereoselectivity.</title>
        <authorList>
            <person name="Savino S."/>
            <person name="Ferrandi E.E."/>
            <person name="Forneris F."/>
            <person name="Rovida S."/>
            <person name="Riva S."/>
            <person name="Monti D."/>
            <person name="Mattevi A."/>
        </authorList>
    </citation>
    <scope>X-RAY CRYSTALLOGRAPHY (1.60 ANGSTROMS)</scope>
    <scope>FUNCTION</scope>
    <scope>CATALYTIC ACTIVITY</scope>
    <scope>BIOTECHNOLOGY</scope>
    <scope>DELETION MUTANTS</scope>
    <scope>DOMAIN</scope>
    <scope>ACTIVE SITE</scope>
    <source>
        <strain>ATCC 25986 / DSM 3979 / JCM 10188 / KCTC 3647 / NCTC 11838 / VPI 1003</strain>
    </source>
</reference>
<reference evidence="14" key="6">
    <citation type="journal article" date="2017" name="Acta Crystallogr. F Struct. Biol. Commun.">
        <title>Structure of NADP+-bound 7beta-hydroxysteroid dehydrogenase reveals two cofactor-binding modes.</title>
        <authorList>
            <person name="Wang R."/>
            <person name="Wu J."/>
            <person name="Jin D.K."/>
            <person name="Chen Y."/>
            <person name="Lv Z."/>
            <person name="Chen Q."/>
            <person name="Miao Q."/>
            <person name="Huo X."/>
            <person name="Wang F."/>
        </authorList>
    </citation>
    <scope>X-RAY CRYSTALLOGRAPHY (1.70 ANGSTROMS) IN COMPLEX WITH NADP</scope>
    <scope>SUBUNIT</scope>
    <source>
        <strain>ATCC 25986 / DSM 3979 / JCM 10188 / KCTC 3647 / NCTC 11838 / VPI 1003</strain>
    </source>
</reference>
<protein>
    <recommendedName>
        <fullName evidence="6 7 8">7beta-hydroxysteroid dehydrogenase</fullName>
        <shortName evidence="6">7beta-HSDH</shortName>
        <ecNumber evidence="2 3 5">1.1.1.201</ecNumber>
    </recommendedName>
    <alternativeName>
        <fullName evidence="6 9">NADP-dependent 7beta-hydroxysteroid dehydrogenase</fullName>
    </alternativeName>
</protein>
<feature type="chain" id="PRO_0000450344" description="7beta-hydroxysteroid dehydrogenase">
    <location>
        <begin position="1"/>
        <end position="263"/>
    </location>
</feature>
<feature type="active site" description="Proton acceptor" evidence="11">
    <location>
        <position position="156"/>
    </location>
</feature>
<feature type="binding site" evidence="4 14">
    <location>
        <begin position="17"/>
        <end position="21"/>
    </location>
    <ligand>
        <name>NADP(+)</name>
        <dbReference type="ChEBI" id="CHEBI:58349"/>
    </ligand>
</feature>
<feature type="binding site" evidence="4 14">
    <location>
        <begin position="40"/>
        <end position="41"/>
    </location>
    <ligand>
        <name>NADP(+)</name>
        <dbReference type="ChEBI" id="CHEBI:58349"/>
    </ligand>
</feature>
<feature type="binding site" evidence="4 14">
    <location>
        <begin position="66"/>
        <end position="67"/>
    </location>
    <ligand>
        <name>NADP(+)</name>
        <dbReference type="ChEBI" id="CHEBI:58349"/>
    </ligand>
</feature>
<feature type="binding site" evidence="4 14">
    <location>
        <position position="240"/>
    </location>
    <ligand>
        <name>NADP(+)</name>
        <dbReference type="ChEBI" id="CHEBI:58349"/>
    </ligand>
</feature>
<feature type="site" description="Transition state stabilizer" evidence="11">
    <location>
        <position position="143"/>
    </location>
</feature>
<feature type="site" description="Lowers pKa of active site Tyr" evidence="1">
    <location>
        <position position="160"/>
    </location>
</feature>
<feature type="helix" evidence="15">
    <location>
        <begin position="3"/>
        <end position="7"/>
    </location>
</feature>
<feature type="strand" evidence="15">
    <location>
        <begin position="9"/>
        <end position="15"/>
    </location>
</feature>
<feature type="helix" evidence="15">
    <location>
        <begin position="19"/>
        <end position="30"/>
    </location>
</feature>
<feature type="strand" evidence="15">
    <location>
        <begin position="34"/>
        <end position="40"/>
    </location>
</feature>
<feature type="helix" evidence="15">
    <location>
        <begin position="42"/>
        <end position="56"/>
    </location>
</feature>
<feature type="strand" evidence="15">
    <location>
        <begin position="60"/>
        <end position="64"/>
    </location>
</feature>
<feature type="helix" evidence="15">
    <location>
        <begin position="72"/>
        <end position="80"/>
    </location>
</feature>
<feature type="strand" evidence="15">
    <location>
        <begin position="85"/>
        <end position="90"/>
    </location>
</feature>
<feature type="helix" evidence="15">
    <location>
        <begin position="100"/>
        <end position="102"/>
    </location>
</feature>
<feature type="helix" evidence="15">
    <location>
        <begin position="105"/>
        <end position="115"/>
    </location>
</feature>
<feature type="helix" evidence="15">
    <location>
        <begin position="117"/>
        <end position="132"/>
    </location>
</feature>
<feature type="strand" evidence="15">
    <location>
        <begin position="136"/>
        <end position="143"/>
    </location>
</feature>
<feature type="helix" evidence="15">
    <location>
        <begin position="145"/>
        <end position="148"/>
    </location>
</feature>
<feature type="helix" evidence="15">
    <location>
        <begin position="154"/>
        <end position="173"/>
    </location>
</feature>
<feature type="turn" evidence="15">
    <location>
        <begin position="174"/>
        <end position="176"/>
    </location>
</feature>
<feature type="strand" evidence="15">
    <location>
        <begin position="177"/>
        <end position="186"/>
    </location>
</feature>
<feature type="helix" evidence="15">
    <location>
        <begin position="192"/>
        <end position="195"/>
    </location>
</feature>
<feature type="helix" evidence="15">
    <location>
        <begin position="202"/>
        <end position="208"/>
    </location>
</feature>
<feature type="helix" evidence="15">
    <location>
        <begin position="214"/>
        <end position="224"/>
    </location>
</feature>
<feature type="turn" evidence="15">
    <location>
        <begin position="225"/>
        <end position="227"/>
    </location>
</feature>
<feature type="strand" evidence="15">
    <location>
        <begin position="229"/>
        <end position="234"/>
    </location>
</feature>
<feature type="helix" evidence="15">
    <location>
        <begin position="235"/>
        <end position="247"/>
    </location>
</feature>
<feature type="helix" evidence="15">
    <location>
        <begin position="250"/>
        <end position="258"/>
    </location>
</feature>
<organism>
    <name type="scientific">Collinsella aerofaciens (strain ATCC 25986 / DSM 3979 / JCM 10188 / KCTC 3647 / NCTC 11838 / VPI 1003)</name>
    <dbReference type="NCBI Taxonomy" id="411903"/>
    <lineage>
        <taxon>Bacteria</taxon>
        <taxon>Bacillati</taxon>
        <taxon>Actinomycetota</taxon>
        <taxon>Coriobacteriia</taxon>
        <taxon>Coriobacteriales</taxon>
        <taxon>Coriobacteriaceae</taxon>
        <taxon>Collinsella</taxon>
    </lineage>
</organism>
<accession>A4ECA9</accession>
<evidence type="ECO:0000250" key="1">
    <source>
        <dbReference type="UniProtKB" id="P0AET8"/>
    </source>
</evidence>
<evidence type="ECO:0000269" key="2">
    <source>
    </source>
</evidence>
<evidence type="ECO:0000269" key="3">
    <source>
    </source>
</evidence>
<evidence type="ECO:0000269" key="4">
    <source>
    </source>
</evidence>
<evidence type="ECO:0000269" key="5">
    <source>
    </source>
</evidence>
<evidence type="ECO:0000303" key="6">
    <source>
    </source>
</evidence>
<evidence type="ECO:0000303" key="7">
    <source>
    </source>
</evidence>
<evidence type="ECO:0000303" key="8">
    <source>
    </source>
</evidence>
<evidence type="ECO:0000303" key="9">
    <source>
    </source>
</evidence>
<evidence type="ECO:0000305" key="10"/>
<evidence type="ECO:0000305" key="11">
    <source>
    </source>
</evidence>
<evidence type="ECO:0000312" key="12">
    <source>
        <dbReference type="EMBL" id="EBA38809.1"/>
    </source>
</evidence>
<evidence type="ECO:0007744" key="13">
    <source>
        <dbReference type="PDB" id="5FYD"/>
    </source>
</evidence>
<evidence type="ECO:0007744" key="14">
    <source>
        <dbReference type="PDB" id="5GT9"/>
    </source>
</evidence>
<evidence type="ECO:0007829" key="15">
    <source>
        <dbReference type="PDB" id="5FYD"/>
    </source>
</evidence>
<proteinExistence type="evidence at protein level"/>
<name>HSDHB_COLAA</name>
<keyword id="KW-0002">3D-structure</keyword>
<keyword id="KW-0088">Bile acid catabolism</keyword>
<keyword id="KW-0442">Lipid degradation</keyword>
<keyword id="KW-0443">Lipid metabolism</keyword>
<keyword id="KW-0521">NADP</keyword>
<keyword id="KW-0547">Nucleotide-binding</keyword>
<keyword id="KW-0560">Oxidoreductase</keyword>
<keyword id="KW-0753">Steroid metabolism</keyword>
<gene>
    <name evidence="12" type="ORF">COLAER_02088</name>
</gene>
<comment type="function">
    <text evidence="2 3 5 10">7beta-hydroxysteroid dehydrogenase that catalyzes the reduction of the 7-oxo group of 7-oxo-lithocholate (7-oxo-LCA), to yield ursodeoxycholate (UDCA) (PubMed:21181147, PubMed:27006087, PubMed:6954878). As C.aerofaciens is an intestinal bacterium, this enzyme probably contributes to the formation of UDCA in the human colon. UDCA is regarded as a chemopreventive beneficial secondary bile acid due to its low hydrophobicity; it protects hepatocytes and bile duct epithelial cells against necrosis and apoptosis induced by more hydrophobic secondary bile acids like deoxycholate (DCA) (Probable). This enzyme is also able to catalyze the reverse reaction, i.e. the oxidation of the 7beta-hydroxy group of UDCA to 7-oxo-LCA (PubMed:21181147, PubMed:6954878). To a lesser extent, is also active on the taurine- and glycine-conjugates of ursodeoxycholate. It is specific for NADPH/NADP(+) as the electron acceptor/donor since it is not active with NADH/NAD(+) (PubMed:6954878). In the presence of NADPH, 7beta-HSDH can also reduce dehydrocholate (PubMed:21181147). And is also able to oxidize ursocholate (PubMed:27006087).</text>
</comment>
<comment type="catalytic activity">
    <reaction evidence="2 3 5">
        <text>a 7beta-hydroxysteroid + NADP(+) = a 7-oxosteroid + NADPH + H(+)</text>
        <dbReference type="Rhea" id="RHEA:20233"/>
        <dbReference type="ChEBI" id="CHEBI:15378"/>
        <dbReference type="ChEBI" id="CHEBI:35349"/>
        <dbReference type="ChEBI" id="CHEBI:47789"/>
        <dbReference type="ChEBI" id="CHEBI:57783"/>
        <dbReference type="ChEBI" id="CHEBI:58349"/>
        <dbReference type="EC" id="1.1.1.201"/>
    </reaction>
    <physiologicalReaction direction="left-to-right" evidence="2">
        <dbReference type="Rhea" id="RHEA:20234"/>
    </physiologicalReaction>
    <physiologicalReaction direction="right-to-left" evidence="2">
        <dbReference type="Rhea" id="RHEA:20235"/>
    </physiologicalReaction>
</comment>
<comment type="catalytic activity">
    <reaction evidence="2 3 5">
        <text>7-oxolithocholate + NADPH + H(+) = ursodeoxycholate + NADP(+)</text>
        <dbReference type="Rhea" id="RHEA:47540"/>
        <dbReference type="ChEBI" id="CHEBI:15378"/>
        <dbReference type="ChEBI" id="CHEBI:57783"/>
        <dbReference type="ChEBI" id="CHEBI:58349"/>
        <dbReference type="ChEBI" id="CHEBI:78604"/>
        <dbReference type="ChEBI" id="CHEBI:78605"/>
    </reaction>
    <physiologicalReaction direction="left-to-right" evidence="2">
        <dbReference type="Rhea" id="RHEA:47541"/>
    </physiologicalReaction>
    <physiologicalReaction direction="right-to-left" evidence="2">
        <dbReference type="Rhea" id="RHEA:47542"/>
    </physiologicalReaction>
</comment>
<comment type="catalytic activity">
    <reaction evidence="2">
        <text>7beta-hydroxy-3,12-dioxo-5beta-cholan-24-oate + NADP(+) = dehydrocholate + NADPH + H(+)</text>
        <dbReference type="Rhea" id="RHEA:53860"/>
        <dbReference type="ChEBI" id="CHEBI:15378"/>
        <dbReference type="ChEBI" id="CHEBI:57783"/>
        <dbReference type="ChEBI" id="CHEBI:58349"/>
        <dbReference type="ChEBI" id="CHEBI:137881"/>
        <dbReference type="ChEBI" id="CHEBI:137882"/>
    </reaction>
</comment>
<comment type="catalytic activity">
    <reaction evidence="3">
        <text>ursocholate + NADP(+) = 3alpha,12alpha-dihydroxy-7-oxo-5beta-cholanate + NADPH + H(+)</text>
        <dbReference type="Rhea" id="RHEA:53856"/>
        <dbReference type="ChEBI" id="CHEBI:11893"/>
        <dbReference type="ChEBI" id="CHEBI:15378"/>
        <dbReference type="ChEBI" id="CHEBI:57783"/>
        <dbReference type="ChEBI" id="CHEBI:58349"/>
        <dbReference type="ChEBI" id="CHEBI:137880"/>
    </reaction>
</comment>
<comment type="biophysicochemical properties">
    <kinetics>
        <KM evidence="2">5.32 uM for NADP(+)</KM>
        <KM evidence="2">4.5 uM for NADPH</KM>
        <KM evidence="2">6.23 uM for ursodeoxycholate</KM>
        <KM evidence="2">5.2 uM for 7-oxolithocholate</KM>
        <KM evidence="2">9.23 uM for dehydrocholate</KM>
        <KM evidence="5">0.108 mM for ursodeoxycholate</KM>
        <KM evidence="5">0.909 mM for glycoursodeoxycholate</KM>
        <KM evidence="5">1.639 mM for tauroursodeoxycholate</KM>
        <KM evidence="5">0.4 mM for NADP(+)</KM>
        <Vmax evidence="2">38.17 umol/min/mg enzyme for the oxidation of ursodeoxycholate</Vmax>
        <Vmax evidence="2">30.77 umol/min/mg enzyme for the reduction of 7-oxolithocholate</Vmax>
        <Vmax evidence="2">28.33 umol/min/mg enzyme for the reduction of dehydrocholate</Vmax>
        <Vmax evidence="5">0.2 umol/min/mg enzyme for the oxidation of ursodeoxycholate</Vmax>
        <Vmax evidence="5">0.25 umol/min/mg enzyme for the oxidation of glycoursodeoxycholate</Vmax>
        <Vmax evidence="5">0.24 umol/min/mg enzyme for the oxidation of tauroursodeoxycholate</Vmax>
        <text evidence="2">kcat is 1179 min(-1) for the oxidation of ursodeoxycholate. kcat is 951 min(-1) for the reduction of 7-oxolithocholate. kcat is 875 min(-1) for the reduction of dehydrocholate.</text>
    </kinetics>
    <phDependence>
        <text evidence="2">Optimum pH is 9-10 for the oxidation of ursodeoxycholate. Optimum pH is 4-6 for the reduction of 7-oxo-LCA and dehydrocholate.</text>
    </phDependence>
    <temperatureDependence>
        <text evidence="2">Is not very thermostable. The enzyme is completely inactivated at 50 degrees Celsius within 5 minutes and at 40 degrees Celsius within 400 minutes.</text>
    </temperatureDependence>
</comment>
<comment type="subunit">
    <text evidence="2 4 5">Homodimer.</text>
</comment>
<comment type="induction">
    <text evidence="5">Is expressed constitutively and repressed by ursodeoxycholate.</text>
</comment>
<comment type="domain">
    <text evidence="3">The 27 C-terminal residues (residues 237-263) are absolutely required for enzymatic activity; a deletion mutant lacking this C-terminal region shows a complete absence of enzymatic activity.</text>
</comment>
<comment type="biotechnology">
    <text evidence="3">Could be a useful biocatalyst for the preparative production of ursodeoxycholate, an FDA-approved cholic acid derivate drug used to treat cholesterol gallstones and current sole alternative to surgical intervention.</text>
</comment>
<comment type="similarity">
    <text evidence="10">Belongs to the short-chain dehydrogenases/reductases (SDR) family.</text>
</comment>
<sequence>MNLREKYGEWGLILGATEGVGKAFCEKIAAGGMNVVMVGRREEKLNVLAGEIRETYGVETKVVRADFSQPGAAETVFAATEGLDMGFMSYVACLHSFGKIQDTPWEKHEAMINVNVVTFLKCFHHYMRIFAAQDRGAVINVSSMTGISSSPWNGQYGAGKAFILKMTEAVACECEGTGVDVEVITLGTTLTPSLLSNLPGGPQGEAVMKIALTPEECVDEAFEKLGKELSVIAGQRNKDSVHDWKANHTEDEYIRYMGSFYRD</sequence>